<reference key="1">
    <citation type="journal article" date="2010" name="Genome Biol.">
        <title>Structure and dynamics of the pan-genome of Streptococcus pneumoniae and closely related species.</title>
        <authorList>
            <person name="Donati C."/>
            <person name="Hiller N.L."/>
            <person name="Tettelin H."/>
            <person name="Muzzi A."/>
            <person name="Croucher N.J."/>
            <person name="Angiuoli S.V."/>
            <person name="Oggioni M."/>
            <person name="Dunning Hotopp J.C."/>
            <person name="Hu F.Z."/>
            <person name="Riley D.R."/>
            <person name="Covacci A."/>
            <person name="Mitchell T.J."/>
            <person name="Bentley S.D."/>
            <person name="Kilian M."/>
            <person name="Ehrlich G.D."/>
            <person name="Rappuoli R."/>
            <person name="Moxon E.R."/>
            <person name="Masignani V."/>
        </authorList>
    </citation>
    <scope>NUCLEOTIDE SEQUENCE [LARGE SCALE GENOMIC DNA]</scope>
    <source>
        <strain>Hungary19A-6</strain>
    </source>
</reference>
<keyword id="KW-0067">ATP-binding</keyword>
<keyword id="KW-0227">DNA damage</keyword>
<keyword id="KW-0234">DNA repair</keyword>
<keyword id="KW-0238">DNA-binding</keyword>
<keyword id="KW-0269">Exonuclease</keyword>
<keyword id="KW-0347">Helicase</keyword>
<keyword id="KW-0378">Hydrolase</keyword>
<keyword id="KW-0413">Isomerase</keyword>
<keyword id="KW-0540">Nuclease</keyword>
<keyword id="KW-0547">Nucleotide-binding</keyword>
<organism>
    <name type="scientific">Streptococcus pneumoniae (strain Hungary19A-6)</name>
    <dbReference type="NCBI Taxonomy" id="487214"/>
    <lineage>
        <taxon>Bacteria</taxon>
        <taxon>Bacillati</taxon>
        <taxon>Bacillota</taxon>
        <taxon>Bacilli</taxon>
        <taxon>Lactobacillales</taxon>
        <taxon>Streptococcaceae</taxon>
        <taxon>Streptococcus</taxon>
    </lineage>
</organism>
<evidence type="ECO:0000255" key="1">
    <source>
        <dbReference type="HAMAP-Rule" id="MF_01451"/>
    </source>
</evidence>
<gene>
    <name evidence="1" type="primary">addA</name>
    <name type="synonym">rexA</name>
    <name type="ordered locus">SPH_1226</name>
</gene>
<protein>
    <recommendedName>
        <fullName evidence="1">ATP-dependent helicase/nuclease subunit A</fullName>
        <ecNumber evidence="1">3.1.-.-</ecNumber>
        <ecNumber evidence="1">5.6.2.4</ecNumber>
    </recommendedName>
    <alternativeName>
        <fullName evidence="1">ATP-dependent helicase/nuclease AddA</fullName>
    </alternativeName>
    <alternativeName>
        <fullName evidence="1">DNA 3'-5' helicase AddA</fullName>
    </alternativeName>
</protein>
<feature type="chain" id="PRO_0000379337" description="ATP-dependent helicase/nuclease subunit A">
    <location>
        <begin position="1"/>
        <end position="1216"/>
    </location>
</feature>
<feature type="domain" description="UvrD-like helicase ATP-binding" evidence="1">
    <location>
        <begin position="26"/>
        <end position="488"/>
    </location>
</feature>
<feature type="domain" description="UvrD-like helicase C-terminal" evidence="1">
    <location>
        <begin position="515"/>
        <end position="802"/>
    </location>
</feature>
<feature type="binding site" evidence="1">
    <location>
        <begin position="47"/>
        <end position="54"/>
    </location>
    <ligand>
        <name>ATP</name>
        <dbReference type="ChEBI" id="CHEBI:30616"/>
    </ligand>
</feature>
<name>ADDA_STRPI</name>
<comment type="function">
    <text evidence="1">The heterodimer acts as both an ATP-dependent DNA helicase and an ATP-dependent, dual-direction single-stranded exonuclease. Recognizes the chi site generating a DNA molecule suitable for the initiation of homologous recombination. The AddA nuclease domain is required for chi fragment generation; this subunit has the helicase and 3' -&gt; 5' nuclease activities.</text>
</comment>
<comment type="catalytic activity">
    <reaction evidence="1">
        <text>Couples ATP hydrolysis with the unwinding of duplex DNA by translocating in the 3'-5' direction.</text>
        <dbReference type="EC" id="5.6.2.4"/>
    </reaction>
</comment>
<comment type="catalytic activity">
    <reaction evidence="1">
        <text>ATP + H2O = ADP + phosphate + H(+)</text>
        <dbReference type="Rhea" id="RHEA:13065"/>
        <dbReference type="ChEBI" id="CHEBI:15377"/>
        <dbReference type="ChEBI" id="CHEBI:15378"/>
        <dbReference type="ChEBI" id="CHEBI:30616"/>
        <dbReference type="ChEBI" id="CHEBI:43474"/>
        <dbReference type="ChEBI" id="CHEBI:456216"/>
        <dbReference type="EC" id="5.6.2.4"/>
    </reaction>
</comment>
<comment type="cofactor">
    <cofactor evidence="1">
        <name>Mg(2+)</name>
        <dbReference type="ChEBI" id="CHEBI:18420"/>
    </cofactor>
</comment>
<comment type="subunit">
    <text evidence="1">Heterodimer of AddA and AddB/RexB.</text>
</comment>
<comment type="similarity">
    <text evidence="1">Belongs to the helicase family. AddA subfamily.</text>
</comment>
<accession>B1IBR6</accession>
<sequence length="1216" mass="140231">MKLIPFLSEEEIQKLQEAEANSSKEQKKTAEQIEAIYTSGQNILVSASAGSGKTFVMAERILDQLARGVEISQLFISTFTVKAANELKERLEKKISKKIQETDDVDLKQHLGRQLADLPNAAIGTMDSFTQKFLGKHGYLLDIAPNFRILQNQSEQLLLENEVFHEVFEAHYQGKQKETFSHLLKNFAGRGKDERGLRQQVYKIYDFLQSTSNPQKWLSDSFLKGFEKADFTSEKEKLTEQIKQALWDLESFFRYHLDNDAKEFAKAAYLENVQLILDEIGSLNQESDSQAYQAVLAHVVAISKEKNGRALTNASRKADLKPLADAYNEERKTQFAKLGQLSDQITILDYQERYHGDTWKLAKTFQSFMSDFVEAYRQRKRQENAFEFADISHYTIEILENFPQVRESYQERFHEVMVDEYQDTNHIQERMLELLSNGHNRFMVGDIKQSIYRFRQADPQIFNEKFQRYAQNPQEGKLILLKENFRSSSEVLSATNDVFERLMDQEVGEINYDNKHQLVFANTKLTPNPDNKAEFLLYDKDDTGEEEESQTETKLTGEMRLVIKEILKLHQEKGVAFKEIALLTSSRSRNDQILLALSEYGIPVKTDGEQNNYLQSLEVQVMLDTLRVIHNPLQDYALVALMKSPMFGFDEDELARLSLQKAEDKVHENLYEKLVNAQKMASSQKGLIHTALAEKLKQFMDILASWRLYAKTHSLYDLIWKIYNDRFYYDYVGALPNGPARQANLYALALRADQFEKSNFKGLPRFIRMIDQVLEAQHDLASVVVAPPKDAVELMTIHKSKGLEFPYVFILNMDQDFNKQDSMSEVILSRQNGLGVKYIAKMETGAVEDHYPKTIKLSIPSLTYRQNEEELQLASYSEQMRLLYVAMTRAEKKLYLVGKGSREKLESKEYPAAKNGKLNSNTRLQARNFQDWLWAISKVFTKDKLNFSYRFIGEDQLTREAIGELETKSPLQDSSQADNRQSDTIKEALEMLKEVEVYNTLHRAAIELPSVQTPSQIKKFYEPVMDMEGVEIAGQGQSVGKKISFDLPDFSTKEKVTGAEIGSATHELMQRIDLSQQLTLASLTETLKQVQTSQAVRDKINLDKILAFFDTVLGQEILANTDHLYREQPFSMLKRDQKSQEDFVVRGILDGYLLYENKIVLFDYKTDRYDEPSQLVDRYRGQLALYEEALSRAYSIENIEKYLILLGKDEVQVVKV</sequence>
<dbReference type="EC" id="3.1.-.-" evidence="1"/>
<dbReference type="EC" id="5.6.2.4" evidence="1"/>
<dbReference type="EMBL" id="CP000936">
    <property type="protein sequence ID" value="ACA37039.1"/>
    <property type="molecule type" value="Genomic_DNA"/>
</dbReference>
<dbReference type="RefSeq" id="WP_000767219.1">
    <property type="nucleotide sequence ID" value="NC_010380.1"/>
</dbReference>
<dbReference type="SMR" id="B1IBR6"/>
<dbReference type="KEGG" id="spv:SPH_1226"/>
<dbReference type="HOGENOM" id="CLU_001114_3_1_9"/>
<dbReference type="Proteomes" id="UP000002163">
    <property type="component" value="Chromosome"/>
</dbReference>
<dbReference type="GO" id="GO:0005829">
    <property type="term" value="C:cytosol"/>
    <property type="evidence" value="ECO:0007669"/>
    <property type="project" value="TreeGrafter"/>
</dbReference>
<dbReference type="GO" id="GO:0033202">
    <property type="term" value="C:DNA helicase complex"/>
    <property type="evidence" value="ECO:0007669"/>
    <property type="project" value="TreeGrafter"/>
</dbReference>
<dbReference type="GO" id="GO:0043138">
    <property type="term" value="F:3'-5' DNA helicase activity"/>
    <property type="evidence" value="ECO:0007669"/>
    <property type="project" value="UniProtKB-UniRule"/>
</dbReference>
<dbReference type="GO" id="GO:0008408">
    <property type="term" value="F:3'-5' exonuclease activity"/>
    <property type="evidence" value="ECO:0007669"/>
    <property type="project" value="UniProtKB-UniRule"/>
</dbReference>
<dbReference type="GO" id="GO:0005524">
    <property type="term" value="F:ATP binding"/>
    <property type="evidence" value="ECO:0007669"/>
    <property type="project" value="UniProtKB-UniRule"/>
</dbReference>
<dbReference type="GO" id="GO:0016887">
    <property type="term" value="F:ATP hydrolysis activity"/>
    <property type="evidence" value="ECO:0007669"/>
    <property type="project" value="RHEA"/>
</dbReference>
<dbReference type="GO" id="GO:0003690">
    <property type="term" value="F:double-stranded DNA binding"/>
    <property type="evidence" value="ECO:0007669"/>
    <property type="project" value="UniProtKB-UniRule"/>
</dbReference>
<dbReference type="GO" id="GO:0000724">
    <property type="term" value="P:double-strand break repair via homologous recombination"/>
    <property type="evidence" value="ECO:0007669"/>
    <property type="project" value="UniProtKB-UniRule"/>
</dbReference>
<dbReference type="CDD" id="cd17932">
    <property type="entry name" value="DEXQc_UvrD"/>
    <property type="match status" value="1"/>
</dbReference>
<dbReference type="FunFam" id="3.40.50.300:FF:001196">
    <property type="entry name" value="ATP-dependent helicase/nuclease subunit A"/>
    <property type="match status" value="1"/>
</dbReference>
<dbReference type="FunFam" id="3.40.50.300:FF:002351">
    <property type="entry name" value="ATP-dependent helicase/nuclease subunit A"/>
    <property type="match status" value="1"/>
</dbReference>
<dbReference type="Gene3D" id="3.90.320.10">
    <property type="match status" value="1"/>
</dbReference>
<dbReference type="Gene3D" id="3.40.50.300">
    <property type="entry name" value="P-loop containing nucleotide triphosphate hydrolases"/>
    <property type="match status" value="4"/>
</dbReference>
<dbReference type="Gene3D" id="1.10.486.10">
    <property type="entry name" value="PCRA, domain 4"/>
    <property type="match status" value="1"/>
</dbReference>
<dbReference type="HAMAP" id="MF_01451">
    <property type="entry name" value="AddA"/>
    <property type="match status" value="1"/>
</dbReference>
<dbReference type="InterPro" id="IPR014152">
    <property type="entry name" value="AddA"/>
</dbReference>
<dbReference type="InterPro" id="IPR014017">
    <property type="entry name" value="DNA_helicase_UvrD-like_C"/>
</dbReference>
<dbReference type="InterPro" id="IPR000212">
    <property type="entry name" value="DNA_helicase_UvrD/REP"/>
</dbReference>
<dbReference type="InterPro" id="IPR027417">
    <property type="entry name" value="P-loop_NTPase"/>
</dbReference>
<dbReference type="InterPro" id="IPR011604">
    <property type="entry name" value="PDDEXK-like_dom_sf"/>
</dbReference>
<dbReference type="InterPro" id="IPR038726">
    <property type="entry name" value="PDDEXK_AddAB-type"/>
</dbReference>
<dbReference type="InterPro" id="IPR011335">
    <property type="entry name" value="Restrct_endonuc-II-like"/>
</dbReference>
<dbReference type="InterPro" id="IPR014016">
    <property type="entry name" value="UvrD-like_ATP-bd"/>
</dbReference>
<dbReference type="NCBIfam" id="TIGR02785">
    <property type="entry name" value="addA_Gpos"/>
    <property type="match status" value="1"/>
</dbReference>
<dbReference type="PANTHER" id="PTHR11070:SF48">
    <property type="entry name" value="ATP-DEPENDENT HELICASE_NUCLEASE SUBUNIT A"/>
    <property type="match status" value="1"/>
</dbReference>
<dbReference type="PANTHER" id="PTHR11070">
    <property type="entry name" value="UVRD / RECB / PCRA DNA HELICASE FAMILY MEMBER"/>
    <property type="match status" value="1"/>
</dbReference>
<dbReference type="Pfam" id="PF12705">
    <property type="entry name" value="PDDEXK_1"/>
    <property type="match status" value="1"/>
</dbReference>
<dbReference type="Pfam" id="PF00580">
    <property type="entry name" value="UvrD-helicase"/>
    <property type="match status" value="1"/>
</dbReference>
<dbReference type="Pfam" id="PF13361">
    <property type="entry name" value="UvrD_C"/>
    <property type="match status" value="1"/>
</dbReference>
<dbReference type="SUPFAM" id="SSF52540">
    <property type="entry name" value="P-loop containing nucleoside triphosphate hydrolases"/>
    <property type="match status" value="1"/>
</dbReference>
<dbReference type="SUPFAM" id="SSF52980">
    <property type="entry name" value="Restriction endonuclease-like"/>
    <property type="match status" value="1"/>
</dbReference>
<dbReference type="PROSITE" id="PS51198">
    <property type="entry name" value="UVRD_HELICASE_ATP_BIND"/>
    <property type="match status" value="1"/>
</dbReference>
<dbReference type="PROSITE" id="PS51217">
    <property type="entry name" value="UVRD_HELICASE_CTER"/>
    <property type="match status" value="1"/>
</dbReference>
<proteinExistence type="inferred from homology"/>